<organism>
    <name type="scientific">Saccharomyces cerevisiae (strain ATCC 204508 / S288c)</name>
    <name type="common">Baker's yeast</name>
    <dbReference type="NCBI Taxonomy" id="559292"/>
    <lineage>
        <taxon>Eukaryota</taxon>
        <taxon>Fungi</taxon>
        <taxon>Dikarya</taxon>
        <taxon>Ascomycota</taxon>
        <taxon>Saccharomycotina</taxon>
        <taxon>Saccharomycetes</taxon>
        <taxon>Saccharomycetales</taxon>
        <taxon>Saccharomycetaceae</taxon>
        <taxon>Saccharomyces</taxon>
    </lineage>
</organism>
<sequence length="656" mass="74785">MSYQRNSARASLDLRSQYQQLEGRMRSEHFNPAYQQQQQKGQNIPLSLPSSLAQRNPIPYPIDAVTSDPTIPAQLNVYDHDRQNSIVDAAAGTNTTHSLNSNNIPSSQNNNINNNNINNVGSFTDPSMLTLPKMSLHSHQKQYDSNQNDPRSPLAILIPTSAQPTDVLSARFSAWRNVIRAILVYLSETASIQDEIVRQQLRLSHAVQFPFFSIENQYQPVSNEDKSMQKFFLPLGSGSVQDLPTMLTKYHDNLASLASKSSKELTSEIIPRLEDLRRDLLVKIKEIKALQSDFKNSCNKELQQTKHLMKLFNESLKECKLGTPKSDPFLIKLQLEKQIKRQLVEENYLHEAFDNLQNSGAQLESVIVMEIQNGLTSYARILGKEAQVVFDSVISKLDSTILNKNTNLEWDSFILRNISNFVPPNLPMRRFKEISYSNQNDPFTFEVKSGFLEKRSKFLKSYSRGFYVLTPSFLHEFKTPDKHKFSTPLMSIPLVECTVTEHSKKTKSNSEQGKNKFILRTNSNGLIHRGHNWVFKVDSYDDMIEWFGNIKALSSLPNYDDKCKYVSKVAKLSKEKAKSNENTTESVTPQVTNEQHTRYDDVSSSNFPLNSIPKLDNLTITNTTSSIPETNDSQIQNRVPEFYIENVDSPRKSNQL</sequence>
<feature type="chain" id="PRO_0000203453" description="Phosphatidylinositol 4,5-bisphosphate-binding protein SLM2">
    <location>
        <begin position="1"/>
        <end position="656"/>
    </location>
</feature>
<feature type="domain" description="PH" evidence="1">
    <location>
        <begin position="445"/>
        <end position="555"/>
    </location>
</feature>
<feature type="region of interest" description="Disordered" evidence="2">
    <location>
        <begin position="577"/>
        <end position="605"/>
    </location>
</feature>
<feature type="short sequence motif" description="PXIXIT-like, required for interaction with CNA1 and CNA2, and calcineurin-dependent dephosphorylation">
    <location>
        <begin position="640"/>
        <end position="645"/>
    </location>
</feature>
<feature type="compositionally biased region" description="Polar residues" evidence="2">
    <location>
        <begin position="580"/>
        <end position="594"/>
    </location>
</feature>
<feature type="modified residue" description="Phosphoserine" evidence="10">
    <location>
        <position position="626"/>
    </location>
</feature>
<feature type="modified residue" description="Phosphoserine" evidence="8 9 10">
    <location>
        <position position="649"/>
    </location>
</feature>
<feature type="modified residue" description="Phosphoserine" evidence="9 10">
    <location>
        <position position="653"/>
    </location>
</feature>
<name>SLM2_YEAST</name>
<accession>P53955</accession>
<accession>D6W1D2</accession>
<accession>Q2VQW4</accession>
<comment type="function">
    <text evidence="5 6 7">Together with SLM1, effector of the TORC2- and calcineurin-signaling pathways. Phosphorylated and activated by TORC2 under favorable growth conditions. Mediates actin polarization via inhibition of calcineurin-dependent transcription. Upon nutrient limitation or environmental stress, gets dephosphorylated by calcineurin, inhibiting interaction with TORC2, thereby antagonizing TORC2 signaling and mediating calcineurin-dependent actin depolarization. Also functions in heat-induced, calcineurin-mediated uracil permease (FUR4) endocytosis.</text>
</comment>
<comment type="subunit">
    <text evidence="5 6 7">Heterodimer of SLM1-SLM2. Binds phosphatidylinositol 4,5-bisphosphate, which is required for function. Interacts with the TORC2 subunits AVO2, BIT61 and TOR2. Interacts with the calcineurin catalytic subunits CNA1 and CNA2.</text>
</comment>
<comment type="interaction">
    <interactant intactId="EBI-28706">
        <id>P53955</id>
    </interactant>
    <interactant intactId="EBI-22980">
        <id>P43603</id>
        <label>LSB3</label>
    </interactant>
    <organismsDiffer>false</organismsDiffer>
    <experiments>2</experiments>
</comment>
<comment type="interaction">
    <interactant intactId="EBI-28706">
        <id>P53955</id>
    </interactant>
    <interactant intactId="EBI-25172">
        <id>P40485</id>
        <label>SLM1</label>
    </interactant>
    <organismsDiffer>false</organismsDiffer>
    <experiments>4</experiments>
</comment>
<comment type="subcellular location">
    <subcellularLocation>
        <location evidence="4 5 6">Cell membrane</location>
        <topology evidence="4 5 6">Peripheral membrane protein</topology>
        <orientation evidence="4 5 6">Cytoplasmic side</orientation>
    </subcellularLocation>
</comment>
<comment type="miscellaneous">
    <text evidence="3">Present with 2610 molecules/cell in log phase SD medium.</text>
</comment>
<dbReference type="EMBL" id="X94547">
    <property type="protein sequence ID" value="CAA64235.1"/>
    <property type="molecule type" value="Genomic_DNA"/>
</dbReference>
<dbReference type="EMBL" id="Z71323">
    <property type="protein sequence ID" value="CAA95915.1"/>
    <property type="molecule type" value="Genomic_DNA"/>
</dbReference>
<dbReference type="EMBL" id="AY692658">
    <property type="protein sequence ID" value="AAT92677.1"/>
    <property type="molecule type" value="Genomic_DNA"/>
</dbReference>
<dbReference type="EMBL" id="AY899254">
    <property type="protein sequence ID" value="AAX83939.1"/>
    <property type="molecule type" value="mRNA"/>
</dbReference>
<dbReference type="EMBL" id="U12141">
    <property type="protein sequence ID" value="AAA99665.1"/>
    <property type="molecule type" value="Genomic_DNA"/>
</dbReference>
<dbReference type="EMBL" id="BK006947">
    <property type="protein sequence ID" value="DAA10498.1"/>
    <property type="molecule type" value="Genomic_DNA"/>
</dbReference>
<dbReference type="PIR" id="S61097">
    <property type="entry name" value="S61097"/>
</dbReference>
<dbReference type="RefSeq" id="NP_014351.3">
    <property type="nucleotide sequence ID" value="NM_001182886.3"/>
</dbReference>
<dbReference type="BioGRID" id="35777">
    <property type="interactions" value="164"/>
</dbReference>
<dbReference type="DIP" id="DIP-1269N"/>
<dbReference type="FunCoup" id="P53955">
    <property type="interactions" value="67"/>
</dbReference>
<dbReference type="IntAct" id="P53955">
    <property type="interactions" value="12"/>
</dbReference>
<dbReference type="MINT" id="P53955"/>
<dbReference type="STRING" id="4932.YNL047C"/>
<dbReference type="GlyGen" id="P53955">
    <property type="glycosylation" value="3 sites, 1 O-linked glycan (3 sites)"/>
</dbReference>
<dbReference type="iPTMnet" id="P53955"/>
<dbReference type="PaxDb" id="4932-YNL047C"/>
<dbReference type="PeptideAtlas" id="P53955"/>
<dbReference type="EnsemblFungi" id="YNL047C_mRNA">
    <property type="protein sequence ID" value="YNL047C"/>
    <property type="gene ID" value="YNL047C"/>
</dbReference>
<dbReference type="GeneID" id="855680"/>
<dbReference type="KEGG" id="sce:YNL047C"/>
<dbReference type="AGR" id="SGD:S000004992"/>
<dbReference type="SGD" id="S000004992">
    <property type="gene designation" value="SLM2"/>
</dbReference>
<dbReference type="VEuPathDB" id="FungiDB:YNL047C"/>
<dbReference type="eggNOG" id="ENOG502QRAF">
    <property type="taxonomic scope" value="Eukaryota"/>
</dbReference>
<dbReference type="GeneTree" id="ENSGT00940000176324"/>
<dbReference type="HOGENOM" id="CLU_013663_1_0_1"/>
<dbReference type="InParanoid" id="P53955"/>
<dbReference type="OMA" id="QVHEENA"/>
<dbReference type="OrthoDB" id="5598057at2759"/>
<dbReference type="BioCyc" id="YEAST:G3O-33081-MONOMER"/>
<dbReference type="BioGRID-ORCS" id="855680">
    <property type="hits" value="6 hits in 10 CRISPR screens"/>
</dbReference>
<dbReference type="PRO" id="PR:P53955"/>
<dbReference type="Proteomes" id="UP000002311">
    <property type="component" value="Chromosome XIV"/>
</dbReference>
<dbReference type="RNAct" id="P53955">
    <property type="molecule type" value="protein"/>
</dbReference>
<dbReference type="GO" id="GO:0071944">
    <property type="term" value="C:cell periphery"/>
    <property type="evidence" value="ECO:0007005"/>
    <property type="project" value="SGD"/>
</dbReference>
<dbReference type="GO" id="GO:0005737">
    <property type="term" value="C:cytoplasm"/>
    <property type="evidence" value="ECO:0000318"/>
    <property type="project" value="GO_Central"/>
</dbReference>
<dbReference type="GO" id="GO:0005886">
    <property type="term" value="C:plasma membrane"/>
    <property type="evidence" value="ECO:0000314"/>
    <property type="project" value="SGD"/>
</dbReference>
<dbReference type="GO" id="GO:0035091">
    <property type="term" value="F:phosphatidylinositol binding"/>
    <property type="evidence" value="ECO:0000304"/>
    <property type="project" value="SGD"/>
</dbReference>
<dbReference type="GO" id="GO:0030036">
    <property type="term" value="P:actin cytoskeleton organization"/>
    <property type="evidence" value="ECO:0000316"/>
    <property type="project" value="SGD"/>
</dbReference>
<dbReference type="GO" id="GO:0051017">
    <property type="term" value="P:actin filament bundle assembly"/>
    <property type="evidence" value="ECO:0000316"/>
    <property type="project" value="SGD"/>
</dbReference>
<dbReference type="GO" id="GO:0070941">
    <property type="term" value="P:eisosome assembly"/>
    <property type="evidence" value="ECO:0000316"/>
    <property type="project" value="SGD"/>
</dbReference>
<dbReference type="GO" id="GO:0016197">
    <property type="term" value="P:endosomal transport"/>
    <property type="evidence" value="ECO:0000316"/>
    <property type="project" value="SGD"/>
</dbReference>
<dbReference type="GO" id="GO:0030950">
    <property type="term" value="P:establishment or maintenance of actin cytoskeleton polarity"/>
    <property type="evidence" value="ECO:0000353"/>
    <property type="project" value="SGD"/>
</dbReference>
<dbReference type="GO" id="GO:0072659">
    <property type="term" value="P:protein localization to plasma membrane"/>
    <property type="evidence" value="ECO:0000316"/>
    <property type="project" value="SGD"/>
</dbReference>
<dbReference type="GO" id="GO:0001558">
    <property type="term" value="P:regulation of cell growth"/>
    <property type="evidence" value="ECO:0000316"/>
    <property type="project" value="SGD"/>
</dbReference>
<dbReference type="GO" id="GO:0031929">
    <property type="term" value="P:TOR signaling"/>
    <property type="evidence" value="ECO:0000353"/>
    <property type="project" value="SGD"/>
</dbReference>
<dbReference type="CDD" id="cd13311">
    <property type="entry name" value="PH_Slm1"/>
    <property type="match status" value="1"/>
</dbReference>
<dbReference type="FunFam" id="2.30.29.30:FF:000328">
    <property type="entry name" value="Phosphatidylinositol 4,5-bisphosphate-binding protein SLM1"/>
    <property type="match status" value="1"/>
</dbReference>
<dbReference type="FunFam" id="1.20.1270.60:FF:000078">
    <property type="entry name" value="Slm1p"/>
    <property type="match status" value="1"/>
</dbReference>
<dbReference type="Gene3D" id="1.20.1270.60">
    <property type="entry name" value="Arfaptin homology (AH) domain/BAR domain"/>
    <property type="match status" value="1"/>
</dbReference>
<dbReference type="Gene3D" id="2.30.29.30">
    <property type="entry name" value="Pleckstrin-homology domain (PH domain)/Phosphotyrosine-binding domain (PTB)"/>
    <property type="match status" value="1"/>
</dbReference>
<dbReference type="InterPro" id="IPR027267">
    <property type="entry name" value="AH/BAR_dom_sf"/>
</dbReference>
<dbReference type="InterPro" id="IPR046868">
    <property type="entry name" value="BAR_4"/>
</dbReference>
<dbReference type="InterPro" id="IPR011993">
    <property type="entry name" value="PH-like_dom_sf"/>
</dbReference>
<dbReference type="InterPro" id="IPR001849">
    <property type="entry name" value="PH_domain"/>
</dbReference>
<dbReference type="InterPro" id="IPR046869">
    <property type="entry name" value="SLM1/RGC1-like_PH"/>
</dbReference>
<dbReference type="InterPro" id="IPR043453">
    <property type="entry name" value="Slm1_PH"/>
</dbReference>
<dbReference type="PANTHER" id="PTHR31941">
    <property type="entry name" value="CYTOSKELETAL SIGNALING PROTEIN SLM1"/>
    <property type="match status" value="1"/>
</dbReference>
<dbReference type="PANTHER" id="PTHR31941:SF16">
    <property type="entry name" value="PHOSPHATIDYLINOSITOL 4,5-BISPHOSPHATE-BINDING PROTEIN SLM1-RELATED"/>
    <property type="match status" value="1"/>
</dbReference>
<dbReference type="Pfam" id="PF20400">
    <property type="entry name" value="BAR_4"/>
    <property type="match status" value="1"/>
</dbReference>
<dbReference type="Pfam" id="PF20399">
    <property type="entry name" value="PH_20"/>
    <property type="match status" value="1"/>
</dbReference>
<dbReference type="SMART" id="SM00233">
    <property type="entry name" value="PH"/>
    <property type="match status" value="1"/>
</dbReference>
<dbReference type="SUPFAM" id="SSF103657">
    <property type="entry name" value="BAR/IMD domain-like"/>
    <property type="match status" value="1"/>
</dbReference>
<dbReference type="SUPFAM" id="SSF50729">
    <property type="entry name" value="PH domain-like"/>
    <property type="match status" value="1"/>
</dbReference>
<dbReference type="PROSITE" id="PS50003">
    <property type="entry name" value="PH_DOMAIN"/>
    <property type="match status" value="1"/>
</dbReference>
<protein>
    <recommendedName>
        <fullName>Phosphatidylinositol 4,5-bisphosphate-binding protein SLM2</fullName>
    </recommendedName>
    <alternativeName>
        <fullName>Synthetic lethal with MSS4 protein 2</fullName>
    </alternativeName>
    <alternativeName>
        <fullName>TORC2 effector protein SLM2</fullName>
    </alternativeName>
</protein>
<evidence type="ECO:0000255" key="1">
    <source>
        <dbReference type="PROSITE-ProRule" id="PRU00145"/>
    </source>
</evidence>
<evidence type="ECO:0000256" key="2">
    <source>
        <dbReference type="SAM" id="MobiDB-lite"/>
    </source>
</evidence>
<evidence type="ECO:0000269" key="3">
    <source>
    </source>
</evidence>
<evidence type="ECO:0000269" key="4">
    <source>
    </source>
</evidence>
<evidence type="ECO:0000269" key="5">
    <source>
    </source>
</evidence>
<evidence type="ECO:0000269" key="6">
    <source>
    </source>
</evidence>
<evidence type="ECO:0000269" key="7">
    <source>
    </source>
</evidence>
<evidence type="ECO:0007744" key="8">
    <source>
    </source>
</evidence>
<evidence type="ECO:0007744" key="9">
    <source>
    </source>
</evidence>
<evidence type="ECO:0007744" key="10">
    <source>
    </source>
</evidence>
<keyword id="KW-1003">Cell membrane</keyword>
<keyword id="KW-0472">Membrane</keyword>
<keyword id="KW-0597">Phosphoprotein</keyword>
<keyword id="KW-1185">Reference proteome</keyword>
<proteinExistence type="evidence at protein level"/>
<reference key="1">
    <citation type="journal article" date="1996" name="Yeast">
        <title>The sequence of 12.8 kb from the left arm of chromosome XIV reveals a sigma element, a pro-tRNA and six complete open reading frames, one of which encodes a protein similar to the human leukotriene A4 hydrolase.</title>
        <authorList>
            <person name="Nasr F."/>
            <person name="Becam A.-M."/>
            <person name="Herbert C.J."/>
        </authorList>
    </citation>
    <scope>NUCLEOTIDE SEQUENCE [GENOMIC DNA]</scope>
    <source>
        <strain>ATCC 96604 / S288c / FY1679</strain>
    </source>
</reference>
<reference key="2">
    <citation type="journal article" date="1997" name="Nature">
        <title>The nucleotide sequence of Saccharomyces cerevisiae chromosome XIV and its evolutionary implications.</title>
        <authorList>
            <person name="Philippsen P."/>
            <person name="Kleine K."/>
            <person name="Poehlmann R."/>
            <person name="Duesterhoeft A."/>
            <person name="Hamberg K."/>
            <person name="Hegemann J.H."/>
            <person name="Obermaier B."/>
            <person name="Urrestarazu L.A."/>
            <person name="Aert R."/>
            <person name="Albermann K."/>
            <person name="Altmann R."/>
            <person name="Andre B."/>
            <person name="Baladron V."/>
            <person name="Ballesta J.P.G."/>
            <person name="Becam A.-M."/>
            <person name="Beinhauer J.D."/>
            <person name="Boskovic J."/>
            <person name="Buitrago M.J."/>
            <person name="Bussereau F."/>
            <person name="Coster F."/>
            <person name="Crouzet M."/>
            <person name="D'Angelo M."/>
            <person name="Dal Pero F."/>
            <person name="De Antoni A."/>
            <person name="del Rey F."/>
            <person name="Doignon F."/>
            <person name="Domdey H."/>
            <person name="Dubois E."/>
            <person name="Fiedler T.A."/>
            <person name="Fleig U."/>
            <person name="Floeth M."/>
            <person name="Fritz C."/>
            <person name="Gaillardin C."/>
            <person name="Garcia-Cantalejo J.M."/>
            <person name="Glansdorff N."/>
            <person name="Goffeau A."/>
            <person name="Gueldener U."/>
            <person name="Herbert C.J."/>
            <person name="Heumann K."/>
            <person name="Heuss-Neitzel D."/>
            <person name="Hilbert H."/>
            <person name="Hinni K."/>
            <person name="Iraqui Houssaini I."/>
            <person name="Jacquet M."/>
            <person name="Jimenez A."/>
            <person name="Jonniaux J.-L."/>
            <person name="Karpfinger-Hartl L."/>
            <person name="Lanfranchi G."/>
            <person name="Lepingle A."/>
            <person name="Levesque H."/>
            <person name="Lyck R."/>
            <person name="Maftahi M."/>
            <person name="Mallet L."/>
            <person name="Maurer C.T.C."/>
            <person name="Messenguy F."/>
            <person name="Mewes H.-W."/>
            <person name="Moestl D."/>
            <person name="Nasr F."/>
            <person name="Nicaud J.-M."/>
            <person name="Niedenthal R.K."/>
            <person name="Pandolfo D."/>
            <person name="Pierard A."/>
            <person name="Piravandi E."/>
            <person name="Planta R.J."/>
            <person name="Pohl T.M."/>
            <person name="Purnelle B."/>
            <person name="Rebischung C."/>
            <person name="Remacha M.A."/>
            <person name="Revuelta J.L."/>
            <person name="Rinke M."/>
            <person name="Saiz J.E."/>
            <person name="Sartorello F."/>
            <person name="Scherens B."/>
            <person name="Sen-Gupta M."/>
            <person name="Soler-Mira A."/>
            <person name="Urbanus J.H.M."/>
            <person name="Valle G."/>
            <person name="Van Dyck L."/>
            <person name="Verhasselt P."/>
            <person name="Vierendeels F."/>
            <person name="Vissers S."/>
            <person name="Voet M."/>
            <person name="Volckaert G."/>
            <person name="Wach A."/>
            <person name="Wambutt R."/>
            <person name="Wedler H."/>
            <person name="Zollner A."/>
            <person name="Hani J."/>
        </authorList>
    </citation>
    <scope>NUCLEOTIDE SEQUENCE [LARGE SCALE GENOMIC DNA]</scope>
    <source>
        <strain>ATCC 204508 / S288c</strain>
    </source>
</reference>
<reference key="3">
    <citation type="journal article" date="2014" name="G3 (Bethesda)">
        <title>The reference genome sequence of Saccharomyces cerevisiae: Then and now.</title>
        <authorList>
            <person name="Engel S.R."/>
            <person name="Dietrich F.S."/>
            <person name="Fisk D.G."/>
            <person name="Binkley G."/>
            <person name="Balakrishnan R."/>
            <person name="Costanzo M.C."/>
            <person name="Dwight S.S."/>
            <person name="Hitz B.C."/>
            <person name="Karra K."/>
            <person name="Nash R.S."/>
            <person name="Weng S."/>
            <person name="Wong E.D."/>
            <person name="Lloyd P."/>
            <person name="Skrzypek M.S."/>
            <person name="Miyasato S.R."/>
            <person name="Simison M."/>
            <person name="Cherry J.M."/>
        </authorList>
    </citation>
    <scope>GENOME REANNOTATION</scope>
    <source>
        <strain>ATCC 204508 / S288c</strain>
    </source>
</reference>
<reference key="4">
    <citation type="journal article" date="2007" name="Genome Res.">
        <title>Approaching a complete repository of sequence-verified protein-encoding clones for Saccharomyces cerevisiae.</title>
        <authorList>
            <person name="Hu Y."/>
            <person name="Rolfs A."/>
            <person name="Bhullar B."/>
            <person name="Murthy T.V.S."/>
            <person name="Zhu C."/>
            <person name="Berger M.F."/>
            <person name="Camargo A.A."/>
            <person name="Kelley F."/>
            <person name="McCarron S."/>
            <person name="Jepson D."/>
            <person name="Richardson A."/>
            <person name="Raphael J."/>
            <person name="Moreira D."/>
            <person name="Taycher E."/>
            <person name="Zuo D."/>
            <person name="Mohr S."/>
            <person name="Kane M.F."/>
            <person name="Williamson J."/>
            <person name="Simpson A.J.G."/>
            <person name="Bulyk M.L."/>
            <person name="Harlow E."/>
            <person name="Marsischky G."/>
            <person name="Kolodner R.D."/>
            <person name="LaBaer J."/>
        </authorList>
    </citation>
    <scope>NUCLEOTIDE SEQUENCE [GENOMIC DNA]</scope>
    <source>
        <strain>ATCC 204508 / S288c</strain>
    </source>
</reference>
<reference key="5">
    <citation type="journal article" date="2005" name="Curr. Genet.">
        <title>Identification and characterization of upstream open reading frames (uORF) in the 5' untranslated regions (UTR) of genes in Saccharomyces cerevisiae.</title>
        <authorList>
            <person name="Zhang Z."/>
            <person name="Dietrich F.S."/>
        </authorList>
    </citation>
    <scope>NUCLEOTIDE SEQUENCE [MRNA] OF 1-65</scope>
    <source>
        <strain>ATCC 208353 / W303-1A</strain>
    </source>
</reference>
<reference key="6">
    <citation type="journal article" date="1995" name="Yeast">
        <title>The sequence of a 44 420 bp fragment located on the left arm of chromosome XIV from Saccharomyces cerevisiae.</title>
        <authorList>
            <person name="Bergez P."/>
            <person name="Doignon F."/>
            <person name="Crouzet M."/>
        </authorList>
    </citation>
    <scope>NUCLEOTIDE SEQUENCE [GENOMIC DNA] OF 149-656</scope>
    <source>
        <strain>S288c / FY1676</strain>
    </source>
</reference>
<reference key="7">
    <citation type="journal article" date="1996" name="Yeast">
        <authorList>
            <person name="Bergez P."/>
            <person name="Doignon F."/>
            <person name="Crouzet M."/>
        </authorList>
    </citation>
    <scope>ERRATUM OF PUBMED:8533472</scope>
</reference>
<reference key="8">
    <citation type="journal article" date="2003" name="Nature">
        <title>Global analysis of protein expression in yeast.</title>
        <authorList>
            <person name="Ghaemmaghami S."/>
            <person name="Huh W.-K."/>
            <person name="Bower K."/>
            <person name="Howson R.W."/>
            <person name="Belle A."/>
            <person name="Dephoure N."/>
            <person name="O'Shea E.K."/>
            <person name="Weissman J.S."/>
        </authorList>
    </citation>
    <scope>LEVEL OF PROTEIN EXPRESSION [LARGE SCALE ANALYSIS]</scope>
</reference>
<reference key="9">
    <citation type="journal article" date="2004" name="EMBO J.">
        <title>Genome-wide lethality screen identifies new PI4,5P2 effectors that regulate the actin cytoskeleton.</title>
        <authorList>
            <person name="Audhya A."/>
            <person name="Loewith R."/>
            <person name="Parsons A.B."/>
            <person name="Gao L."/>
            <person name="Tabuchi M."/>
            <person name="Zhou H."/>
            <person name="Boone C."/>
            <person name="Hall M.N."/>
            <person name="Emr S.D."/>
        </authorList>
    </citation>
    <scope>FUNCTION</scope>
    <scope>SUBCELLULAR LOCATION</scope>
    <scope>PHOSPHORYLATION BY TORC2</scope>
    <scope>INTERACTION WITH SLM1</scope>
</reference>
<reference key="10">
    <citation type="journal article" date="2004" name="Mol. Cell">
        <title>Genome-wide analysis of membrane targeting by S.cerevisiae pleckstrin homology domains.</title>
        <authorList>
            <person name="Yu J.W."/>
            <person name="Mendrola J.M."/>
            <person name="Audhya A."/>
            <person name="Singh S."/>
            <person name="Keleti D."/>
            <person name="DeWald D.B."/>
            <person name="Murray D."/>
            <person name="Emr S.D."/>
            <person name="Lemmon M.A."/>
        </authorList>
    </citation>
    <scope>PHOSPHOINOSITIDE-BINDING</scope>
    <scope>SUBCELLULAR LOCATION</scope>
</reference>
<reference key="11">
    <citation type="journal article" date="2005" name="Mol. Biol. Cell">
        <title>The pleckstrin homology domain proteins Slm1 and Slm2 are required for actin cytoskeleton organization in yeast and bind phosphatidylinositol-4,5-bisphosphate and TORC2.</title>
        <authorList>
            <person name="Fadri M."/>
            <person name="Daquinag A."/>
            <person name="Wang S."/>
            <person name="Xue T."/>
            <person name="Kunz J."/>
        </authorList>
    </citation>
    <scope>FUNCTION</scope>
    <scope>INTERACTION WITH AVO2; BIT2; BIT61 AND TOR2</scope>
    <scope>SUBCELLULAR LOCATION</scope>
</reference>
<reference key="12">
    <citation type="journal article" date="2006" name="Mol. Cell. Biol.">
        <title>Slm1 and slm2 are novel substrates of the calcineurin phosphatase required for heat stress-induced endocytosis of the yeast uracil permease.</title>
        <authorList>
            <person name="Bultynck G."/>
            <person name="Heath V.L."/>
            <person name="Majeed A.P."/>
            <person name="Galan J.-M."/>
            <person name="Haguenauer-Tsapis R."/>
            <person name="Cyert M.S."/>
        </authorList>
    </citation>
    <scope>FUNCTION</scope>
    <scope>DEPHOSPHORYLATION BY CALCINEURIN</scope>
    <scope>INTERACTION WITH CNA1 AND CNA2</scope>
</reference>
<reference key="13">
    <citation type="journal article" date="2007" name="J. Proteome Res.">
        <title>Large-scale phosphorylation analysis of alpha-factor-arrested Saccharomyces cerevisiae.</title>
        <authorList>
            <person name="Li X."/>
            <person name="Gerber S.A."/>
            <person name="Rudner A.D."/>
            <person name="Beausoleil S.A."/>
            <person name="Haas W."/>
            <person name="Villen J."/>
            <person name="Elias J.E."/>
            <person name="Gygi S.P."/>
        </authorList>
    </citation>
    <scope>PHOSPHORYLATION [LARGE SCALE ANALYSIS] AT SER-649</scope>
    <scope>IDENTIFICATION BY MASS SPECTROMETRY [LARGE SCALE ANALYSIS]</scope>
    <source>
        <strain>ADR376</strain>
    </source>
</reference>
<reference key="14">
    <citation type="journal article" date="2008" name="Mol. Cell. Proteomics">
        <title>A multidimensional chromatography technology for in-depth phosphoproteome analysis.</title>
        <authorList>
            <person name="Albuquerque C.P."/>
            <person name="Smolka M.B."/>
            <person name="Payne S.H."/>
            <person name="Bafna V."/>
            <person name="Eng J."/>
            <person name="Zhou H."/>
        </authorList>
    </citation>
    <scope>PHOSPHORYLATION [LARGE SCALE ANALYSIS] AT SER-649 AND SER-653</scope>
    <scope>IDENTIFICATION BY MASS SPECTROMETRY [LARGE SCALE ANALYSIS]</scope>
</reference>
<reference key="15">
    <citation type="journal article" date="2009" name="Science">
        <title>Global analysis of Cdk1 substrate phosphorylation sites provides insights into evolution.</title>
        <authorList>
            <person name="Holt L.J."/>
            <person name="Tuch B.B."/>
            <person name="Villen J."/>
            <person name="Johnson A.D."/>
            <person name="Gygi S.P."/>
            <person name="Morgan D.O."/>
        </authorList>
    </citation>
    <scope>PHOSPHORYLATION [LARGE SCALE ANALYSIS] AT SER-626; SER-649 AND SER-653</scope>
    <scope>IDENTIFICATION BY MASS SPECTROMETRY [LARGE SCALE ANALYSIS]</scope>
</reference>
<gene>
    <name type="primary">SLM2</name>
    <name type="synonym">LIT1</name>
    <name type="ordered locus">YNL047C</name>
    <name type="ORF">N2515</name>
    <name type="ORF">YNL2515P</name>
</gene>